<keyword id="KW-0256">Endoplasmic reticulum</keyword>
<keyword id="KW-0444">Lipid biosynthesis</keyword>
<keyword id="KW-0443">Lipid metabolism</keyword>
<keyword id="KW-0472">Membrane</keyword>
<keyword id="KW-0489">Methyltransferase</keyword>
<keyword id="KW-0594">Phospholipid biosynthesis</keyword>
<keyword id="KW-1208">Phospholipid metabolism</keyword>
<keyword id="KW-1185">Reference proteome</keyword>
<keyword id="KW-0949">S-adenosyl-L-methionine</keyword>
<keyword id="KW-0808">Transferase</keyword>
<keyword id="KW-0812">Transmembrane</keyword>
<keyword id="KW-1133">Transmembrane helix</keyword>
<organism>
    <name type="scientific">Paracoccidioides brasiliensis (strain Pb18)</name>
    <dbReference type="NCBI Taxonomy" id="502780"/>
    <lineage>
        <taxon>Eukaryota</taxon>
        <taxon>Fungi</taxon>
        <taxon>Dikarya</taxon>
        <taxon>Ascomycota</taxon>
        <taxon>Pezizomycotina</taxon>
        <taxon>Eurotiomycetes</taxon>
        <taxon>Eurotiomycetidae</taxon>
        <taxon>Onygenales</taxon>
        <taxon>Ajellomycetaceae</taxon>
        <taxon>Paracoccidioides</taxon>
    </lineage>
</organism>
<comment type="function">
    <text evidence="1">Catalyzes the first step of the methylation pathway of phosphatidylcholine biosynthesis, the SAM-dependent methylation of phosphatidylethanolamine (PE) to phosphatidylmonomethylethanolamine (PMME).</text>
</comment>
<comment type="catalytic activity">
    <reaction evidence="1">
        <text>a 1,2-diacyl-sn-glycero-3-phosphoethanolamine + S-adenosyl-L-methionine = a 1,2-diacyl-sn-glycero-3-phospho-N-methylethanolamine + S-adenosyl-L-homocysteine + H(+)</text>
        <dbReference type="Rhea" id="RHEA:11164"/>
        <dbReference type="ChEBI" id="CHEBI:15378"/>
        <dbReference type="ChEBI" id="CHEBI:57856"/>
        <dbReference type="ChEBI" id="CHEBI:59789"/>
        <dbReference type="ChEBI" id="CHEBI:64573"/>
        <dbReference type="ChEBI" id="CHEBI:64612"/>
        <dbReference type="EC" id="2.1.1.17"/>
    </reaction>
</comment>
<comment type="pathway">
    <text evidence="1">Phospholipid metabolism; phosphatidylcholine biosynthesis.</text>
</comment>
<comment type="subcellular location">
    <subcellularLocation>
        <location evidence="1">Endoplasmic reticulum membrane</location>
        <topology evidence="1">Multi-pass membrane protein</topology>
    </subcellularLocation>
</comment>
<comment type="similarity">
    <text evidence="1">Belongs to the class VI-like SAM-binding methyltransferase superfamily. CHO2 family.</text>
</comment>
<reference key="1">
    <citation type="journal article" date="2011" name="PLoS Genet.">
        <title>Comparative genomic analysis of human fungal pathogens causing paracoccidioidomycosis.</title>
        <authorList>
            <person name="Desjardins C.A."/>
            <person name="Champion M.D."/>
            <person name="Holder J.W."/>
            <person name="Muszewska A."/>
            <person name="Goldberg J."/>
            <person name="Bailao A.M."/>
            <person name="Brigido M.M."/>
            <person name="Ferreira M.E."/>
            <person name="Garcia A.M."/>
            <person name="Grynberg M."/>
            <person name="Gujja S."/>
            <person name="Heiman D.I."/>
            <person name="Henn M.R."/>
            <person name="Kodira C.D."/>
            <person name="Leon-Narvaez H."/>
            <person name="Longo L.V.G."/>
            <person name="Ma L.-J."/>
            <person name="Malavazi I."/>
            <person name="Matsuo A.L."/>
            <person name="Morais F.V."/>
            <person name="Pereira M."/>
            <person name="Rodriguez-Brito S."/>
            <person name="Sakthikumar S."/>
            <person name="Salem-Izacc S.M."/>
            <person name="Sykes S.M."/>
            <person name="Teixeira M.M."/>
            <person name="Vallejo M.C."/>
            <person name="Walter M.E."/>
            <person name="Yandava C."/>
            <person name="Young S."/>
            <person name="Zeng Q."/>
            <person name="Zucker J."/>
            <person name="Felipe M.S."/>
            <person name="Goldman G.H."/>
            <person name="Haas B.J."/>
            <person name="McEwen J.G."/>
            <person name="Nino-Vega G."/>
            <person name="Puccia R."/>
            <person name="San-Blas G."/>
            <person name="Soares C.M."/>
            <person name="Birren B.W."/>
            <person name="Cuomo C.A."/>
        </authorList>
    </citation>
    <scope>NUCLEOTIDE SEQUENCE [LARGE SCALE GENOMIC DNA]</scope>
    <source>
        <strain>Pb18</strain>
    </source>
</reference>
<feature type="chain" id="PRO_0000405903" description="Phosphatidylethanolamine N-methyltransferase">
    <location>
        <begin position="1"/>
        <end position="980"/>
    </location>
</feature>
<feature type="topological domain" description="Lumenal" evidence="1">
    <location>
        <begin position="1"/>
        <end position="86"/>
    </location>
</feature>
<feature type="transmembrane region" description="Helical" evidence="1">
    <location>
        <begin position="87"/>
        <end position="107"/>
    </location>
</feature>
<feature type="topological domain" description="Cytoplasmic" evidence="1">
    <location>
        <begin position="108"/>
        <end position="114"/>
    </location>
</feature>
<feature type="transmembrane region" description="Helical" evidence="1">
    <location>
        <begin position="115"/>
        <end position="135"/>
    </location>
</feature>
<feature type="topological domain" description="Lumenal" evidence="1">
    <location>
        <begin position="136"/>
        <end position="200"/>
    </location>
</feature>
<feature type="transmembrane region" description="Helical" evidence="1">
    <location>
        <begin position="201"/>
        <end position="221"/>
    </location>
</feature>
<feature type="topological domain" description="Cytoplasmic" evidence="1">
    <location>
        <begin position="222"/>
        <end position="228"/>
    </location>
</feature>
<feature type="transmembrane region" description="Helical" evidence="1">
    <location>
        <begin position="229"/>
        <end position="249"/>
    </location>
</feature>
<feature type="topological domain" description="Lumenal" evidence="1">
    <location>
        <begin position="250"/>
        <end position="282"/>
    </location>
</feature>
<feature type="transmembrane region" description="Helical" evidence="1">
    <location>
        <begin position="283"/>
        <end position="303"/>
    </location>
</feature>
<feature type="topological domain" description="Cytoplasmic" evidence="1">
    <location>
        <begin position="304"/>
        <end position="305"/>
    </location>
</feature>
<feature type="transmembrane region" description="Helical" evidence="1">
    <location>
        <begin position="306"/>
        <end position="326"/>
    </location>
</feature>
<feature type="topological domain" description="Lumenal" evidence="1">
    <location>
        <begin position="327"/>
        <end position="399"/>
    </location>
</feature>
<feature type="transmembrane region" description="Helical" evidence="1">
    <location>
        <begin position="400"/>
        <end position="419"/>
    </location>
</feature>
<feature type="topological domain" description="Cytoplasmic" evidence="1">
    <location>
        <begin position="420"/>
        <end position="423"/>
    </location>
</feature>
<feature type="transmembrane region" description="Helical" evidence="1">
    <location>
        <begin position="424"/>
        <end position="446"/>
    </location>
</feature>
<feature type="topological domain" description="Lumenal" evidence="1">
    <location>
        <begin position="447"/>
        <end position="475"/>
    </location>
</feature>
<feature type="transmembrane region" description="Helical" evidence="1">
    <location>
        <begin position="476"/>
        <end position="495"/>
    </location>
</feature>
<feature type="topological domain" description="Cytoplasmic" evidence="1">
    <location>
        <begin position="496"/>
        <end position="500"/>
    </location>
</feature>
<feature type="transmembrane region" description="Helical" evidence="1">
    <location>
        <begin position="501"/>
        <end position="521"/>
    </location>
</feature>
<feature type="topological domain" description="Lumenal" evidence="1">
    <location>
        <begin position="522"/>
        <end position="566"/>
    </location>
</feature>
<feature type="transmembrane region" description="Helical" evidence="1">
    <location>
        <begin position="567"/>
        <end position="587"/>
    </location>
</feature>
<feature type="topological domain" description="Cytoplasmic" evidence="1">
    <location>
        <begin position="588"/>
        <end position="980"/>
    </location>
</feature>
<feature type="region of interest" description="Disordered" evidence="2">
    <location>
        <begin position="1"/>
        <end position="64"/>
    </location>
</feature>
<feature type="region of interest" description="Disordered" evidence="2">
    <location>
        <begin position="339"/>
        <end position="360"/>
    </location>
</feature>
<feature type="region of interest" description="Disordered" evidence="2">
    <location>
        <begin position="705"/>
        <end position="733"/>
    </location>
</feature>
<feature type="compositionally biased region" description="Basic and acidic residues" evidence="2">
    <location>
        <begin position="40"/>
        <end position="56"/>
    </location>
</feature>
<feature type="compositionally biased region" description="Basic and acidic residues" evidence="2">
    <location>
        <begin position="344"/>
        <end position="355"/>
    </location>
</feature>
<feature type="compositionally biased region" description="Basic and acidic residues" evidence="2">
    <location>
        <begin position="717"/>
        <end position="733"/>
    </location>
</feature>
<accession>C1G565</accession>
<evidence type="ECO:0000255" key="1">
    <source>
        <dbReference type="HAMAP-Rule" id="MF_03217"/>
    </source>
</evidence>
<evidence type="ECO:0000256" key="2">
    <source>
        <dbReference type="SAM" id="MobiDB-lite"/>
    </source>
</evidence>
<gene>
    <name type="primary">CHO2</name>
    <name type="ORF">PADG_03435</name>
</gene>
<name>CHO2_PARBD</name>
<dbReference type="EC" id="2.1.1.17" evidence="1"/>
<dbReference type="EMBL" id="KN275959">
    <property type="protein sequence ID" value="EEH47337.1"/>
    <property type="molecule type" value="Genomic_DNA"/>
</dbReference>
<dbReference type="RefSeq" id="XP_010758862.1">
    <property type="nucleotide sequence ID" value="XM_010760560.1"/>
</dbReference>
<dbReference type="SMR" id="C1G565"/>
<dbReference type="FunCoup" id="C1G565">
    <property type="interactions" value="56"/>
</dbReference>
<dbReference type="STRING" id="502780.C1G565"/>
<dbReference type="GeneID" id="22582739"/>
<dbReference type="KEGG" id="pbn:PADG_03435"/>
<dbReference type="VEuPathDB" id="FungiDB:PADG_03435"/>
<dbReference type="eggNOG" id="ENOG502QRGH">
    <property type="taxonomic scope" value="Eukaryota"/>
</dbReference>
<dbReference type="HOGENOM" id="CLU_005987_0_0_1"/>
<dbReference type="InParanoid" id="C1G565"/>
<dbReference type="OMA" id="RIWYSVG"/>
<dbReference type="OrthoDB" id="12130at33183"/>
<dbReference type="UniPathway" id="UPA00753"/>
<dbReference type="Proteomes" id="UP000001628">
    <property type="component" value="Unassembled WGS sequence"/>
</dbReference>
<dbReference type="GO" id="GO:0032541">
    <property type="term" value="C:cortical endoplasmic reticulum"/>
    <property type="evidence" value="ECO:0007669"/>
    <property type="project" value="EnsemblFungi"/>
</dbReference>
<dbReference type="GO" id="GO:0005789">
    <property type="term" value="C:endoplasmic reticulum membrane"/>
    <property type="evidence" value="ECO:0007669"/>
    <property type="project" value="UniProtKB-SubCell"/>
</dbReference>
<dbReference type="GO" id="GO:0097038">
    <property type="term" value="C:perinuclear endoplasmic reticulum"/>
    <property type="evidence" value="ECO:0007669"/>
    <property type="project" value="EnsemblFungi"/>
</dbReference>
<dbReference type="GO" id="GO:0004608">
    <property type="term" value="F:phosphatidylethanolamine N-methyltransferase activity"/>
    <property type="evidence" value="ECO:0007669"/>
    <property type="project" value="UniProtKB-UniRule"/>
</dbReference>
<dbReference type="GO" id="GO:0032259">
    <property type="term" value="P:methylation"/>
    <property type="evidence" value="ECO:0007669"/>
    <property type="project" value="UniProtKB-KW"/>
</dbReference>
<dbReference type="GO" id="GO:0006656">
    <property type="term" value="P:phosphatidylcholine biosynthetic process"/>
    <property type="evidence" value="ECO:0007669"/>
    <property type="project" value="UniProtKB-UniRule"/>
</dbReference>
<dbReference type="FunFam" id="2.60.40.2840:FF:000006">
    <property type="entry name" value="Phosphatidylethanolamine N-methyltransferase"/>
    <property type="match status" value="1"/>
</dbReference>
<dbReference type="Gene3D" id="2.60.40.2840">
    <property type="match status" value="1"/>
</dbReference>
<dbReference type="HAMAP" id="MF_03217">
    <property type="entry name" value="PEMT"/>
    <property type="match status" value="1"/>
</dbReference>
<dbReference type="InterPro" id="IPR007318">
    <property type="entry name" value="Phopholipid_MeTrfase"/>
</dbReference>
<dbReference type="InterPro" id="IPR016219">
    <property type="entry name" value="Phosphatid-EA_MeTrfase_fun"/>
</dbReference>
<dbReference type="PANTHER" id="PTHR32138">
    <property type="entry name" value="PHOSPHATIDYLETHANOLAMINE N-METHYLTRANSFERASE"/>
    <property type="match status" value="1"/>
</dbReference>
<dbReference type="PANTHER" id="PTHR32138:SF0">
    <property type="entry name" value="PHOSPHATIDYLETHANOLAMINE N-METHYLTRANSFERASE"/>
    <property type="match status" value="1"/>
</dbReference>
<dbReference type="Pfam" id="PF04191">
    <property type="entry name" value="PEMT"/>
    <property type="match status" value="2"/>
</dbReference>
<dbReference type="PIRSF" id="PIRSF000383">
    <property type="entry name" value="PEAMT"/>
    <property type="match status" value="1"/>
</dbReference>
<dbReference type="PROSITE" id="PS51598">
    <property type="entry name" value="SAM_CHO2"/>
    <property type="match status" value="1"/>
</dbReference>
<protein>
    <recommendedName>
        <fullName evidence="1">Phosphatidylethanolamine N-methyltransferase</fullName>
        <shortName evidence="1">PE methyltransferase</shortName>
        <shortName evidence="1">PEAMT</shortName>
        <shortName evidence="1">PEMT</shortName>
        <ecNumber evidence="1">2.1.1.17</ecNumber>
    </recommendedName>
</protein>
<proteinExistence type="inferred from homology"/>
<sequence>MSGPASSTGFHIHAEGLHGRNVQPSKPTSDGGVAPTALGEKSRVEEDERTDSEKKTFGRTPDGTIFTVPPTRDMVSQLLSPSEPKNLSDIFVLAIISCHIFLLRFLPSSSSRVAAFAIIFLFWRAAYNIGIGWLLHMQSNGRTLVCWAKKSNIFVNPSTGQNPHPILYNLLKWELETKIPEQYSFEDAPTEYNTWLVFRRVVDLILMCDFTSYCLFAIACGGRPAGEGFIMLALRWIAGMSLVLFNLWVKLDAHRVVKDFAWYWGDFFYLIDQDLTFDGVFEMAPHPMYSVGYAGYYGISLMAASYKLLFISILAHAAQFAFLVLVENPHIEKTYNAPPPRKRVAVDTDNVKPQDDDVSQDSSVINDNVYSGQAVATLEPSSMHNLLGPHNIDLYRITDSSVLLIQILFSALAILTPSTPVYQFFFVLNAALWRVWYSVGIGYILNRQSHCKMWTRHFVKYGESNQEAWQQWKGTYHLSMTMTYASFIAATWKMYSFPQDWGYGLVLLRHILGASLIALQIWTSASIYESLGEFGWFFGDFFFDQSPKLTYSGIYRYLNNPERVLGLAGVWGAVLITSTKSVIFLALLSHTLTIAFIQLVERPHMQKLYGQSLRRDAGLVRSLKRSLPPSLKQFHGSVDKILDDSIEFIEEFIEAARPKLAAGVKTFVKDTSALFQKYPARITISRLEPDLAGYDQKDYSISLEGTQSSEPAQFERASGKEGEKARSMPDRRGDKKNLMFEYGAPIKVKWTAPLNHSKKDWIGLYMVTDNTSREITRISSQGRWIGTNKASFDSLTCEQGLISSDIVINKFREDGEPKDVASGEMVFSGDKLWWTQGVFEFRYHHNGKHSVMAVSRPFEIRIGRFDDDAIYGDRYGLVRAAIESALLPVVQNCFDRDPEIAPQTVEEQYGSLVDRNGKYSRRVVFAVHQMFGIEFAPEVVRADGNVRNLAWRICNAKKVLAPYSMSRTNGATTPTAEHEG</sequence>